<organism>
    <name type="scientific">Burkholderia mallei (strain NCTC 10229)</name>
    <dbReference type="NCBI Taxonomy" id="412022"/>
    <lineage>
        <taxon>Bacteria</taxon>
        <taxon>Pseudomonadati</taxon>
        <taxon>Pseudomonadota</taxon>
        <taxon>Betaproteobacteria</taxon>
        <taxon>Burkholderiales</taxon>
        <taxon>Burkholderiaceae</taxon>
        <taxon>Burkholderia</taxon>
        <taxon>pseudomallei group</taxon>
    </lineage>
</organism>
<accession>A2S4A3</accession>
<gene>
    <name evidence="1" type="primary">kdpC</name>
    <name type="ordered locus">BMA10229_A0782</name>
</gene>
<evidence type="ECO:0000255" key="1">
    <source>
        <dbReference type="HAMAP-Rule" id="MF_00276"/>
    </source>
</evidence>
<keyword id="KW-0067">ATP-binding</keyword>
<keyword id="KW-0997">Cell inner membrane</keyword>
<keyword id="KW-1003">Cell membrane</keyword>
<keyword id="KW-0406">Ion transport</keyword>
<keyword id="KW-0472">Membrane</keyword>
<keyword id="KW-0547">Nucleotide-binding</keyword>
<keyword id="KW-0630">Potassium</keyword>
<keyword id="KW-0633">Potassium transport</keyword>
<keyword id="KW-0812">Transmembrane</keyword>
<keyword id="KW-1133">Transmembrane helix</keyword>
<keyword id="KW-0813">Transport</keyword>
<protein>
    <recommendedName>
        <fullName evidence="1">Potassium-transporting ATPase KdpC subunit</fullName>
    </recommendedName>
    <alternativeName>
        <fullName evidence="1">ATP phosphohydrolase [potassium-transporting] C chain</fullName>
    </alternativeName>
    <alternativeName>
        <fullName evidence="1">Potassium-binding and translocating subunit C</fullName>
    </alternativeName>
    <alternativeName>
        <fullName evidence="1">Potassium-translocating ATPase C chain</fullName>
    </alternativeName>
</protein>
<proteinExistence type="inferred from homology"/>
<comment type="function">
    <text evidence="1">Part of the high-affinity ATP-driven potassium transport (or Kdp) system, which catalyzes the hydrolysis of ATP coupled with the electrogenic transport of potassium into the cytoplasm. This subunit acts as a catalytic chaperone that increases the ATP-binding affinity of the ATP-hydrolyzing subunit KdpB by the formation of a transient KdpB/KdpC/ATP ternary complex.</text>
</comment>
<comment type="subunit">
    <text evidence="1">The system is composed of three essential subunits: KdpA, KdpB and KdpC.</text>
</comment>
<comment type="subcellular location">
    <subcellularLocation>
        <location evidence="1">Cell inner membrane</location>
        <topology evidence="1">Single-pass membrane protein</topology>
    </subcellularLocation>
</comment>
<comment type="similarity">
    <text evidence="1">Belongs to the KdpC family.</text>
</comment>
<dbReference type="EMBL" id="CP000546">
    <property type="protein sequence ID" value="ABN03136.1"/>
    <property type="molecule type" value="Genomic_DNA"/>
</dbReference>
<dbReference type="RefSeq" id="WP_004186443.1">
    <property type="nucleotide sequence ID" value="NC_008836.1"/>
</dbReference>
<dbReference type="SMR" id="A2S4A3"/>
<dbReference type="GeneID" id="93059654"/>
<dbReference type="KEGG" id="bml:BMA10229_A0782"/>
<dbReference type="HOGENOM" id="CLU_077094_2_0_4"/>
<dbReference type="Proteomes" id="UP000002283">
    <property type="component" value="Chromosome I"/>
</dbReference>
<dbReference type="GO" id="GO:0005886">
    <property type="term" value="C:plasma membrane"/>
    <property type="evidence" value="ECO:0007669"/>
    <property type="project" value="UniProtKB-SubCell"/>
</dbReference>
<dbReference type="GO" id="GO:0005524">
    <property type="term" value="F:ATP binding"/>
    <property type="evidence" value="ECO:0007669"/>
    <property type="project" value="UniProtKB-UniRule"/>
</dbReference>
<dbReference type="GO" id="GO:0008556">
    <property type="term" value="F:P-type potassium transmembrane transporter activity"/>
    <property type="evidence" value="ECO:0007669"/>
    <property type="project" value="InterPro"/>
</dbReference>
<dbReference type="HAMAP" id="MF_00276">
    <property type="entry name" value="KdpC"/>
    <property type="match status" value="1"/>
</dbReference>
<dbReference type="InterPro" id="IPR003820">
    <property type="entry name" value="KdpC"/>
</dbReference>
<dbReference type="NCBIfam" id="TIGR00681">
    <property type="entry name" value="kdpC"/>
    <property type="match status" value="1"/>
</dbReference>
<dbReference type="NCBIfam" id="NF001454">
    <property type="entry name" value="PRK00315.1"/>
    <property type="match status" value="1"/>
</dbReference>
<dbReference type="PANTHER" id="PTHR30042">
    <property type="entry name" value="POTASSIUM-TRANSPORTING ATPASE C CHAIN"/>
    <property type="match status" value="1"/>
</dbReference>
<dbReference type="PANTHER" id="PTHR30042:SF2">
    <property type="entry name" value="POTASSIUM-TRANSPORTING ATPASE KDPC SUBUNIT"/>
    <property type="match status" value="1"/>
</dbReference>
<dbReference type="Pfam" id="PF02669">
    <property type="entry name" value="KdpC"/>
    <property type="match status" value="1"/>
</dbReference>
<dbReference type="PIRSF" id="PIRSF001296">
    <property type="entry name" value="K_ATPase_KdpC"/>
    <property type="match status" value="1"/>
</dbReference>
<name>KDPC_BURM9</name>
<reference key="1">
    <citation type="journal article" date="2010" name="Genome Biol. Evol.">
        <title>Continuing evolution of Burkholderia mallei through genome reduction and large-scale rearrangements.</title>
        <authorList>
            <person name="Losada L."/>
            <person name="Ronning C.M."/>
            <person name="DeShazer D."/>
            <person name="Woods D."/>
            <person name="Fedorova N."/>
            <person name="Kim H.S."/>
            <person name="Shabalina S.A."/>
            <person name="Pearson T.R."/>
            <person name="Brinkac L."/>
            <person name="Tan P."/>
            <person name="Nandi T."/>
            <person name="Crabtree J."/>
            <person name="Badger J."/>
            <person name="Beckstrom-Sternberg S."/>
            <person name="Saqib M."/>
            <person name="Schutzer S.E."/>
            <person name="Keim P."/>
            <person name="Nierman W.C."/>
        </authorList>
    </citation>
    <scope>NUCLEOTIDE SEQUENCE [LARGE SCALE GENOMIC DNA]</scope>
    <source>
        <strain>NCTC 10229</strain>
    </source>
</reference>
<feature type="chain" id="PRO_1000022270" description="Potassium-transporting ATPase KdpC subunit">
    <location>
        <begin position="1"/>
        <end position="193"/>
    </location>
</feature>
<feature type="transmembrane region" description="Helical" evidence="1">
    <location>
        <begin position="7"/>
        <end position="27"/>
    </location>
</feature>
<sequence>MKSLFRPLIVVFVVLVAVTGLAYPAVMTVFGQAVFPAQANGSLIEKGGRVVGSALIGQQFDAPQYFWGRLSATSPMPYNAAGSGGSNLGPLNPALKDQVKSRLDALKAAGTDLSQPVPVDLVTASASGLDPEISPAAADYQVARVARARKMADADVRRLVADHTSGRQFGVLGEPRVNVLKLNLALDAAQAAH</sequence>